<sequence>MQDIKTYLSTAPVLATFWFGLLAGLLIEINRFFPDALTFSFAF</sequence>
<accession>A6BM27</accession>
<accession>B7ZI94</accession>
<feature type="chain" id="PRO_0000354148" description="Photosystem I reaction center subunit IX">
    <location>
        <begin position="1"/>
        <end position="43"/>
    </location>
</feature>
<feature type="transmembrane region" description="Helical" evidence="1">
    <location>
        <begin position="7"/>
        <end position="27"/>
    </location>
</feature>
<reference key="1">
    <citation type="journal article" date="2007" name="Mol. Biol. Evol.">
        <title>Chloroplast genome (cpDNA) of Cycas taitungensis and 56 cp protein-coding genes of Gnetum parvifolium: insights into cpDNA evolution and phylogeny of extant seed plants.</title>
        <authorList>
            <person name="Wu C.-S."/>
            <person name="Wang Y.-N."/>
            <person name="Liu S.-M."/>
            <person name="Chaw S.-M."/>
        </authorList>
    </citation>
    <scope>NUCLEOTIDE SEQUENCE [LARGE SCALE GENOMIC DNA]</scope>
</reference>
<reference key="2">
    <citation type="journal article" date="2009" name="Mol. Phylogenet. Evol.">
        <title>Evolution of reduced and compact chloroplast genomes (cpDNAs) in gnetophytes: Selection toward a lower-cost strategy.</title>
        <authorList>
            <person name="Wu C.-S."/>
            <person name="Lai Y.-T."/>
            <person name="Lin C.-P."/>
            <person name="Wang Y.-N."/>
            <person name="Chaw S.-M."/>
        </authorList>
    </citation>
    <scope>NUCLEOTIDE SEQUENCE [LARGE SCALE GENOMIC DNA]</scope>
</reference>
<dbReference type="EMBL" id="AB295923">
    <property type="protein sequence ID" value="BAF64872.1"/>
    <property type="molecule type" value="Genomic_DNA"/>
</dbReference>
<dbReference type="EMBL" id="AP009569">
    <property type="protein sequence ID" value="BAH11274.1"/>
    <property type="molecule type" value="Genomic_DNA"/>
</dbReference>
<dbReference type="RefSeq" id="YP_002519763.1">
    <property type="nucleotide sequence ID" value="NC_011942.1"/>
</dbReference>
<dbReference type="SMR" id="A6BM27"/>
<dbReference type="GeneID" id="7368184"/>
<dbReference type="GO" id="GO:0009535">
    <property type="term" value="C:chloroplast thylakoid membrane"/>
    <property type="evidence" value="ECO:0007669"/>
    <property type="project" value="UniProtKB-SubCell"/>
</dbReference>
<dbReference type="GO" id="GO:0009522">
    <property type="term" value="C:photosystem I"/>
    <property type="evidence" value="ECO:0007669"/>
    <property type="project" value="UniProtKB-KW"/>
</dbReference>
<dbReference type="GO" id="GO:0015979">
    <property type="term" value="P:photosynthesis"/>
    <property type="evidence" value="ECO:0007669"/>
    <property type="project" value="UniProtKB-UniRule"/>
</dbReference>
<dbReference type="Gene3D" id="1.20.5.510">
    <property type="entry name" value="Single helix bin"/>
    <property type="match status" value="1"/>
</dbReference>
<dbReference type="HAMAP" id="MF_00522">
    <property type="entry name" value="PSI_PsaJ"/>
    <property type="match status" value="1"/>
</dbReference>
<dbReference type="InterPro" id="IPR002615">
    <property type="entry name" value="PSI_PsaJ"/>
</dbReference>
<dbReference type="InterPro" id="IPR036062">
    <property type="entry name" value="PSI_PsaJ_sf"/>
</dbReference>
<dbReference type="PANTHER" id="PTHR36082">
    <property type="match status" value="1"/>
</dbReference>
<dbReference type="PANTHER" id="PTHR36082:SF2">
    <property type="entry name" value="PHOTOSYSTEM I REACTION CENTER SUBUNIT IX"/>
    <property type="match status" value="1"/>
</dbReference>
<dbReference type="Pfam" id="PF01701">
    <property type="entry name" value="PSI_PsaJ"/>
    <property type="match status" value="1"/>
</dbReference>
<dbReference type="SUPFAM" id="SSF81544">
    <property type="entry name" value="Subunit IX of photosystem I reaction centre, PsaJ"/>
    <property type="match status" value="1"/>
</dbReference>
<proteinExistence type="inferred from homology"/>
<geneLocation type="chloroplast"/>
<keyword id="KW-0150">Chloroplast</keyword>
<keyword id="KW-0472">Membrane</keyword>
<keyword id="KW-0602">Photosynthesis</keyword>
<keyword id="KW-0603">Photosystem I</keyword>
<keyword id="KW-0934">Plastid</keyword>
<keyword id="KW-0793">Thylakoid</keyword>
<keyword id="KW-0812">Transmembrane</keyword>
<keyword id="KW-1133">Transmembrane helix</keyword>
<comment type="function">
    <text evidence="1">May help in the organization of the PsaE and PsaF subunits.</text>
</comment>
<comment type="subcellular location">
    <subcellularLocation>
        <location evidence="1">Plastid</location>
        <location evidence="1">Chloroplast thylakoid membrane</location>
        <topology evidence="1">Single-pass membrane protein</topology>
    </subcellularLocation>
</comment>
<comment type="similarity">
    <text evidence="1">Belongs to the PsaJ family.</text>
</comment>
<gene>
    <name evidence="1" type="primary">psaJ</name>
</gene>
<protein>
    <recommendedName>
        <fullName evidence="1">Photosystem I reaction center subunit IX</fullName>
    </recommendedName>
    <alternativeName>
        <fullName evidence="1">PSI-J</fullName>
    </alternativeName>
</protein>
<organism>
    <name type="scientific">Gnetum parvifolium</name>
    <name type="common">Small-leaved jointfir</name>
    <name type="synonym">Gnetum scandens var. parvifolium</name>
    <dbReference type="NCBI Taxonomy" id="33153"/>
    <lineage>
        <taxon>Eukaryota</taxon>
        <taxon>Viridiplantae</taxon>
        <taxon>Streptophyta</taxon>
        <taxon>Embryophyta</taxon>
        <taxon>Tracheophyta</taxon>
        <taxon>Spermatophyta</taxon>
        <taxon>Gnetopsida</taxon>
        <taxon>Gnetidae</taxon>
        <taxon>Gnetales</taxon>
        <taxon>Gnetaceae</taxon>
        <taxon>Gnetum</taxon>
    </lineage>
</organism>
<name>PSAJ_GNEPA</name>
<evidence type="ECO:0000255" key="1">
    <source>
        <dbReference type="HAMAP-Rule" id="MF_00522"/>
    </source>
</evidence>